<dbReference type="EMBL" id="CP000100">
    <property type="protein sequence ID" value="ABB56568.1"/>
    <property type="molecule type" value="Genomic_DNA"/>
</dbReference>
<dbReference type="RefSeq" id="WP_011243297.1">
    <property type="nucleotide sequence ID" value="NZ_JACJTX010000002.1"/>
</dbReference>
<dbReference type="SMR" id="Q31QV1"/>
<dbReference type="STRING" id="1140.Synpcc7942_0536"/>
<dbReference type="PaxDb" id="1140-Synpcc7942_0536"/>
<dbReference type="GeneID" id="72429359"/>
<dbReference type="KEGG" id="syf:Synpcc7942_0536"/>
<dbReference type="eggNOG" id="COG0236">
    <property type="taxonomic scope" value="Bacteria"/>
</dbReference>
<dbReference type="HOGENOM" id="CLU_108696_5_1_3"/>
<dbReference type="OrthoDB" id="9804551at2"/>
<dbReference type="BioCyc" id="SYNEL:SYNPCC7942_0536-MONOMER"/>
<dbReference type="UniPathway" id="UPA00094"/>
<dbReference type="Proteomes" id="UP000889800">
    <property type="component" value="Chromosome"/>
</dbReference>
<dbReference type="GO" id="GO:0005829">
    <property type="term" value="C:cytosol"/>
    <property type="evidence" value="ECO:0007669"/>
    <property type="project" value="TreeGrafter"/>
</dbReference>
<dbReference type="GO" id="GO:0016020">
    <property type="term" value="C:membrane"/>
    <property type="evidence" value="ECO:0007669"/>
    <property type="project" value="GOC"/>
</dbReference>
<dbReference type="GO" id="GO:0000035">
    <property type="term" value="F:acyl binding"/>
    <property type="evidence" value="ECO:0007669"/>
    <property type="project" value="TreeGrafter"/>
</dbReference>
<dbReference type="GO" id="GO:0000036">
    <property type="term" value="F:acyl carrier activity"/>
    <property type="evidence" value="ECO:0007669"/>
    <property type="project" value="UniProtKB-UniRule"/>
</dbReference>
<dbReference type="GO" id="GO:0031177">
    <property type="term" value="F:phosphopantetheine binding"/>
    <property type="evidence" value="ECO:0007669"/>
    <property type="project" value="InterPro"/>
</dbReference>
<dbReference type="GO" id="GO:0009245">
    <property type="term" value="P:lipid A biosynthetic process"/>
    <property type="evidence" value="ECO:0007669"/>
    <property type="project" value="TreeGrafter"/>
</dbReference>
<dbReference type="FunFam" id="1.10.1200.10:FF:000001">
    <property type="entry name" value="Acyl carrier protein"/>
    <property type="match status" value="1"/>
</dbReference>
<dbReference type="Gene3D" id="1.10.1200.10">
    <property type="entry name" value="ACP-like"/>
    <property type="match status" value="1"/>
</dbReference>
<dbReference type="HAMAP" id="MF_01217">
    <property type="entry name" value="Acyl_carrier"/>
    <property type="match status" value="1"/>
</dbReference>
<dbReference type="InterPro" id="IPR003231">
    <property type="entry name" value="ACP"/>
</dbReference>
<dbReference type="InterPro" id="IPR036736">
    <property type="entry name" value="ACP-like_sf"/>
</dbReference>
<dbReference type="InterPro" id="IPR020806">
    <property type="entry name" value="PKS_PP-bd"/>
</dbReference>
<dbReference type="InterPro" id="IPR009081">
    <property type="entry name" value="PP-bd_ACP"/>
</dbReference>
<dbReference type="InterPro" id="IPR006162">
    <property type="entry name" value="Ppantetheine_attach_site"/>
</dbReference>
<dbReference type="NCBIfam" id="TIGR00517">
    <property type="entry name" value="acyl_carrier"/>
    <property type="match status" value="1"/>
</dbReference>
<dbReference type="NCBIfam" id="NF002148">
    <property type="entry name" value="PRK00982.1-2"/>
    <property type="match status" value="1"/>
</dbReference>
<dbReference type="NCBIfam" id="NF002149">
    <property type="entry name" value="PRK00982.1-3"/>
    <property type="match status" value="1"/>
</dbReference>
<dbReference type="NCBIfam" id="NF002150">
    <property type="entry name" value="PRK00982.1-4"/>
    <property type="match status" value="1"/>
</dbReference>
<dbReference type="NCBIfam" id="NF002151">
    <property type="entry name" value="PRK00982.1-5"/>
    <property type="match status" value="1"/>
</dbReference>
<dbReference type="NCBIfam" id="NF009104">
    <property type="entry name" value="PRK12449.1"/>
    <property type="match status" value="1"/>
</dbReference>
<dbReference type="PANTHER" id="PTHR20863">
    <property type="entry name" value="ACYL CARRIER PROTEIN"/>
    <property type="match status" value="1"/>
</dbReference>
<dbReference type="PANTHER" id="PTHR20863:SF76">
    <property type="entry name" value="CARRIER DOMAIN-CONTAINING PROTEIN"/>
    <property type="match status" value="1"/>
</dbReference>
<dbReference type="Pfam" id="PF00550">
    <property type="entry name" value="PP-binding"/>
    <property type="match status" value="1"/>
</dbReference>
<dbReference type="SMART" id="SM00823">
    <property type="entry name" value="PKS_PP"/>
    <property type="match status" value="1"/>
</dbReference>
<dbReference type="SUPFAM" id="SSF47336">
    <property type="entry name" value="ACP-like"/>
    <property type="match status" value="1"/>
</dbReference>
<dbReference type="PROSITE" id="PS50075">
    <property type="entry name" value="CARRIER"/>
    <property type="match status" value="1"/>
</dbReference>
<dbReference type="PROSITE" id="PS00012">
    <property type="entry name" value="PHOSPHOPANTETHEINE"/>
    <property type="match status" value="1"/>
</dbReference>
<comment type="function">
    <text evidence="1">Carrier of the growing fatty acid chain in fatty acid biosynthesis.</text>
</comment>
<comment type="pathway">
    <text evidence="1">Lipid metabolism; fatty acid biosynthesis.</text>
</comment>
<comment type="subcellular location">
    <subcellularLocation>
        <location evidence="1">Cytoplasm</location>
    </subcellularLocation>
</comment>
<comment type="PTM">
    <text evidence="1">4'-phosphopantetheine is transferred from CoA to a specific serine of apo-ACP by AcpS. This modification is essential for activity because fatty acids are bound in thioester linkage to the sulfhydryl of the prosthetic group.</text>
</comment>
<comment type="similarity">
    <text evidence="1">Belongs to the acyl carrier protein (ACP) family.</text>
</comment>
<name>ACP_SYNE7</name>
<protein>
    <recommendedName>
        <fullName evidence="1">Acyl carrier protein</fullName>
        <shortName evidence="1">ACP</shortName>
    </recommendedName>
</protein>
<organism>
    <name type="scientific">Synechococcus elongatus (strain ATCC 33912 / PCC 7942 / FACHB-805)</name>
    <name type="common">Anacystis nidulans R2</name>
    <dbReference type="NCBI Taxonomy" id="1140"/>
    <lineage>
        <taxon>Bacteria</taxon>
        <taxon>Bacillati</taxon>
        <taxon>Cyanobacteriota</taxon>
        <taxon>Cyanophyceae</taxon>
        <taxon>Synechococcales</taxon>
        <taxon>Synechococcaceae</taxon>
        <taxon>Synechococcus</taxon>
    </lineage>
</organism>
<reference key="1">
    <citation type="submission" date="2005-08" db="EMBL/GenBank/DDBJ databases">
        <title>Complete sequence of chromosome 1 of Synechococcus elongatus PCC 7942.</title>
        <authorList>
            <consortium name="US DOE Joint Genome Institute"/>
            <person name="Copeland A."/>
            <person name="Lucas S."/>
            <person name="Lapidus A."/>
            <person name="Barry K."/>
            <person name="Detter J.C."/>
            <person name="Glavina T."/>
            <person name="Hammon N."/>
            <person name="Israni S."/>
            <person name="Pitluck S."/>
            <person name="Schmutz J."/>
            <person name="Larimer F."/>
            <person name="Land M."/>
            <person name="Kyrpides N."/>
            <person name="Lykidis A."/>
            <person name="Golden S."/>
            <person name="Richardson P."/>
        </authorList>
    </citation>
    <scope>NUCLEOTIDE SEQUENCE [LARGE SCALE GENOMIC DNA]</scope>
    <source>
        <strain>ATCC 33912 / PCC 7942 / FACHB-805</strain>
    </source>
</reference>
<feature type="chain" id="PRO_1000066707" description="Acyl carrier protein">
    <location>
        <begin position="1"/>
        <end position="80"/>
    </location>
</feature>
<feature type="domain" description="Carrier" evidence="2">
    <location>
        <begin position="4"/>
        <end position="79"/>
    </location>
</feature>
<feature type="modified residue" description="O-(pantetheine 4'-phosphoryl)serine" evidence="2">
    <location>
        <position position="39"/>
    </location>
</feature>
<accession>Q31QV1</accession>
<gene>
    <name evidence="1" type="primary">acpP</name>
    <name type="ordered locus">Synpcc7942_0536</name>
</gene>
<proteinExistence type="inferred from homology"/>
<sequence>MSQEDIFSKVKDIVAEQLSVDVAEVKPESSFQNDLGADSLDTVELVMALEEAFDIEIPDEAAEGIATVQDAVDFIASKAA</sequence>
<keyword id="KW-0963">Cytoplasm</keyword>
<keyword id="KW-0275">Fatty acid biosynthesis</keyword>
<keyword id="KW-0276">Fatty acid metabolism</keyword>
<keyword id="KW-0444">Lipid biosynthesis</keyword>
<keyword id="KW-0443">Lipid metabolism</keyword>
<keyword id="KW-0596">Phosphopantetheine</keyword>
<keyword id="KW-0597">Phosphoprotein</keyword>
<keyword id="KW-1185">Reference proteome</keyword>
<evidence type="ECO:0000255" key="1">
    <source>
        <dbReference type="HAMAP-Rule" id="MF_01217"/>
    </source>
</evidence>
<evidence type="ECO:0000255" key="2">
    <source>
        <dbReference type="PROSITE-ProRule" id="PRU00258"/>
    </source>
</evidence>